<feature type="signal peptide" evidence="1">
    <location>
        <begin position="1"/>
        <end position="28"/>
    </location>
</feature>
<feature type="peptide" id="PRO_0000025353" description="Neuropeptide Y">
    <location>
        <begin position="29"/>
        <end position="64"/>
    </location>
</feature>
<feature type="peptide" id="PRO_0000025354" description="C-flanking peptide of NPY">
    <location>
        <begin position="68"/>
        <end position="97"/>
    </location>
</feature>
<feature type="modified residue" description="Tyrosine amide" evidence="1">
    <location>
        <position position="64"/>
    </location>
</feature>
<feature type="sequence conflict" description="In Ref. 2; AAA49914." evidence="3" ref="2">
    <original>E</original>
    <variation>D</variation>
    <location>
        <position position="38"/>
    </location>
</feature>
<feature type="sequence conflict" description="In Ref. 2; AAA49914." evidence="3" ref="2">
    <original>S</original>
    <variation>C</variation>
    <location>
        <position position="69"/>
    </location>
</feature>
<feature type="sequence conflict" description="In Ref. 2; AAA49914." evidence="3" ref="2">
    <original>N</original>
    <variation>S</variation>
    <location>
        <position position="82"/>
    </location>
</feature>
<comment type="function">
    <text>NPY is implicated in the control of feeding and in secretion of gonadotrophin-release hormone.</text>
</comment>
<comment type="subcellular location">
    <subcellularLocation>
        <location>Secreted</location>
    </subcellularLocation>
    <subcellularLocation>
        <location evidence="2">Cytoplasmic vesicle</location>
        <location evidence="2">Secretory vesicle</location>
        <location evidence="2">Neuronal dense core vesicle</location>
    </subcellularLocation>
</comment>
<comment type="similarity">
    <text evidence="3">Belongs to the NPY family.</text>
</comment>
<gene>
    <name type="primary">npy</name>
</gene>
<evidence type="ECO:0000250" key="1"/>
<evidence type="ECO:0000250" key="2">
    <source>
        <dbReference type="UniProtKB" id="P07808"/>
    </source>
</evidence>
<evidence type="ECO:0000305" key="3"/>
<protein>
    <recommendedName>
        <fullName>Pro-neuropeptide Y</fullName>
    </recommendedName>
    <component>
        <recommendedName>
            <fullName>Neuropeptide Y</fullName>
        </recommendedName>
        <alternativeName>
            <fullName>Neuropeptide tyrosine</fullName>
            <shortName>NPY</shortName>
        </alternativeName>
    </component>
    <component>
        <recommendedName>
            <fullName>C-flanking peptide of NPY</fullName>
            <shortName>CPON</shortName>
        </recommendedName>
    </component>
</protein>
<organism>
    <name type="scientific">Xenopus laevis</name>
    <name type="common">African clawed frog</name>
    <dbReference type="NCBI Taxonomy" id="8355"/>
    <lineage>
        <taxon>Eukaryota</taxon>
        <taxon>Metazoa</taxon>
        <taxon>Chordata</taxon>
        <taxon>Craniata</taxon>
        <taxon>Vertebrata</taxon>
        <taxon>Euteleostomi</taxon>
        <taxon>Amphibia</taxon>
        <taxon>Batrachia</taxon>
        <taxon>Anura</taxon>
        <taxon>Pipoidea</taxon>
        <taxon>Pipidae</taxon>
        <taxon>Xenopodinae</taxon>
        <taxon>Xenopus</taxon>
        <taxon>Xenopus</taxon>
    </lineage>
</organism>
<accession>P33689</accession>
<accession>Q68ET5</accession>
<dbReference type="EMBL" id="L11294">
    <property type="protein sequence ID" value="AAA49913.1"/>
    <property type="molecule type" value="mRNA"/>
</dbReference>
<dbReference type="EMBL" id="L07413">
    <property type="protein sequence ID" value="AAA49917.1"/>
    <property type="molecule type" value="mRNA"/>
</dbReference>
<dbReference type="EMBL" id="S55577">
    <property type="protein sequence ID" value="AAB25447.1"/>
    <property type="molecule type" value="mRNA"/>
</dbReference>
<dbReference type="EMBL" id="L11296">
    <property type="protein sequence ID" value="AAA49914.1"/>
    <property type="molecule type" value="mRNA"/>
</dbReference>
<dbReference type="EMBL" id="BC080115">
    <property type="protein sequence ID" value="AAH80115.1"/>
    <property type="molecule type" value="mRNA"/>
</dbReference>
<dbReference type="PIR" id="JC1460">
    <property type="entry name" value="JC1460"/>
</dbReference>
<dbReference type="RefSeq" id="NP_001081300.1">
    <property type="nucleotide sequence ID" value="NM_001087831.1"/>
</dbReference>
<dbReference type="DNASU" id="397763"/>
<dbReference type="GeneID" id="397763"/>
<dbReference type="KEGG" id="xla:397763"/>
<dbReference type="KEGG" id="xla:780752"/>
<dbReference type="AGR" id="Xenbase:XB-GENE-942364"/>
<dbReference type="CTD" id="397763"/>
<dbReference type="CTD" id="780752"/>
<dbReference type="Xenbase" id="XB-GENE-942364">
    <property type="gene designation" value="npy.S"/>
</dbReference>
<dbReference type="OMA" id="YEDPAMW"/>
<dbReference type="OrthoDB" id="9852947at2759"/>
<dbReference type="Proteomes" id="UP000186698">
    <property type="component" value="Chromosome 6L"/>
</dbReference>
<dbReference type="Proteomes" id="UP000186698">
    <property type="component" value="Chromosome 6S"/>
</dbReference>
<dbReference type="Bgee" id="397763">
    <property type="expression patterns" value="Expressed in brain and 3 other cell types or tissues"/>
</dbReference>
<dbReference type="GO" id="GO:0005615">
    <property type="term" value="C:extracellular space"/>
    <property type="evidence" value="ECO:0000318"/>
    <property type="project" value="GO_Central"/>
</dbReference>
<dbReference type="GO" id="GO:0098992">
    <property type="term" value="C:neuronal dense core vesicle"/>
    <property type="evidence" value="ECO:0000250"/>
    <property type="project" value="UniProtKB"/>
</dbReference>
<dbReference type="GO" id="GO:0005184">
    <property type="term" value="F:neuropeptide hormone activity"/>
    <property type="evidence" value="ECO:0000318"/>
    <property type="project" value="GO_Central"/>
</dbReference>
<dbReference type="GO" id="GO:0031841">
    <property type="term" value="F:neuropeptide Y receptor binding"/>
    <property type="evidence" value="ECO:0000318"/>
    <property type="project" value="GO_Central"/>
</dbReference>
<dbReference type="GO" id="GO:0007631">
    <property type="term" value="P:feeding behavior"/>
    <property type="evidence" value="ECO:0000318"/>
    <property type="project" value="GO_Central"/>
</dbReference>
<dbReference type="GO" id="GO:0007218">
    <property type="term" value="P:neuropeptide signaling pathway"/>
    <property type="evidence" value="ECO:0000318"/>
    <property type="project" value="GO_Central"/>
</dbReference>
<dbReference type="CDD" id="cd00126">
    <property type="entry name" value="PAH"/>
    <property type="match status" value="1"/>
</dbReference>
<dbReference type="Gene3D" id="6.10.250.900">
    <property type="match status" value="1"/>
</dbReference>
<dbReference type="InterPro" id="IPR001955">
    <property type="entry name" value="Pancreatic_hormone-like"/>
</dbReference>
<dbReference type="InterPro" id="IPR020392">
    <property type="entry name" value="Pancreatic_hormone-like_CS"/>
</dbReference>
<dbReference type="PANTHER" id="PTHR10533">
    <property type="entry name" value="NEUROPEPTIDE Y/PANCREATIC HORMONE/PEPTIDE YY"/>
    <property type="match status" value="1"/>
</dbReference>
<dbReference type="PANTHER" id="PTHR10533:SF5">
    <property type="entry name" value="PRO-NEUROPEPTIDE Y"/>
    <property type="match status" value="1"/>
</dbReference>
<dbReference type="Pfam" id="PF00159">
    <property type="entry name" value="Hormone_3"/>
    <property type="match status" value="1"/>
</dbReference>
<dbReference type="PRINTS" id="PR00278">
    <property type="entry name" value="PANCHORMONE"/>
</dbReference>
<dbReference type="SMART" id="SM00309">
    <property type="entry name" value="PAH"/>
    <property type="match status" value="1"/>
</dbReference>
<dbReference type="PROSITE" id="PS00265">
    <property type="entry name" value="PANCREATIC_HORMONE_1"/>
    <property type="match status" value="1"/>
</dbReference>
<dbReference type="PROSITE" id="PS50276">
    <property type="entry name" value="PANCREATIC_HORMONE_2"/>
    <property type="match status" value="1"/>
</dbReference>
<reference key="1">
    <citation type="journal article" date="1993" name="Biochem. Biophys. Res. Commun.">
        <title>Cloning and sequence analysis of hypothalamic cDNA encoding Xenopus preproneuropeptide Y.</title>
        <authorList>
            <person name="van Riel M.C.H.M."/>
            <person name="Tuinhof R."/>
            <person name="Roubos E.W."/>
            <person name="Martens G.J.M."/>
        </authorList>
    </citation>
    <scope>NUCLEOTIDE SEQUENCE [MRNA]</scope>
</reference>
<reference key="2">
    <citation type="journal article" date="1994" name="Mol. Cell. Endocrinol.">
        <title>Isolation and characterization of the Xenopus laevis cDNA and genomic homologs of neuropeptide Y.</title>
        <authorList>
            <person name="Griffin D."/>
            <person name="Minth C.D."/>
            <person name="Taylor W.L."/>
        </authorList>
    </citation>
    <scope>NUCLEOTIDE SEQUENCE [MRNA]</scope>
</reference>
<reference key="3">
    <citation type="submission" date="2004-08" db="EMBL/GenBank/DDBJ databases">
        <authorList>
            <consortium name="NIH - Xenopus Gene Collection (XGC) project"/>
        </authorList>
    </citation>
    <scope>NUCLEOTIDE SEQUENCE [LARGE SCALE MRNA]</scope>
    <source>
        <tissue>Eye</tissue>
    </source>
</reference>
<sequence>MQGNMRLWMSVLTLCLSMLICLGTFAEAYPSKPDNPGEDAPAEDMAKYYSALRHYINLITRQRYGKRSSPETMLSDVWWRENTENIPRSRFEDPPMW</sequence>
<name>NPY_XENLA</name>
<proteinExistence type="inferred from homology"/>
<keyword id="KW-0027">Amidation</keyword>
<keyword id="KW-0165">Cleavage on pair of basic residues</keyword>
<keyword id="KW-0968">Cytoplasmic vesicle</keyword>
<keyword id="KW-0527">Neuropeptide</keyword>
<keyword id="KW-1185">Reference proteome</keyword>
<keyword id="KW-0964">Secreted</keyword>
<keyword id="KW-0732">Signal</keyword>